<organism>
    <name type="scientific">Buchnera aphidicola subsp. Baizongia pistaciae (strain Bp)</name>
    <dbReference type="NCBI Taxonomy" id="224915"/>
    <lineage>
        <taxon>Bacteria</taxon>
        <taxon>Pseudomonadati</taxon>
        <taxon>Pseudomonadota</taxon>
        <taxon>Gammaproteobacteria</taxon>
        <taxon>Enterobacterales</taxon>
        <taxon>Erwiniaceae</taxon>
        <taxon>Buchnera</taxon>
    </lineage>
</organism>
<gene>
    <name type="primary">fkpA</name>
    <name type="ordered locus">bbp_476</name>
</gene>
<accession>Q89A61</accession>
<comment type="function">
    <text>PPIases accelerate the folding of proteins. It catalyzes the cis-trans isomerization of proline imidic peptide bonds in oligopeptides.</text>
</comment>
<comment type="catalytic activity">
    <reaction>
        <text>[protein]-peptidylproline (omega=180) = [protein]-peptidylproline (omega=0)</text>
        <dbReference type="Rhea" id="RHEA:16237"/>
        <dbReference type="Rhea" id="RHEA-COMP:10747"/>
        <dbReference type="Rhea" id="RHEA-COMP:10748"/>
        <dbReference type="ChEBI" id="CHEBI:83833"/>
        <dbReference type="ChEBI" id="CHEBI:83834"/>
        <dbReference type="EC" id="5.2.1.8"/>
    </reaction>
</comment>
<comment type="similarity">
    <text evidence="2">Belongs to the FKBP-type PPIase family.</text>
</comment>
<keyword id="KW-0413">Isomerase</keyword>
<keyword id="KW-1185">Reference proteome</keyword>
<keyword id="KW-0697">Rotamase</keyword>
<sequence>MILLKIIHIIFVMIFLSIFFPKSLYASTSLIRKDHIIQKNLENFDDQSAYALGVSLGNYINHSFREQKRLGVILDKNSLLSGIRDSLSGKTILSDQEISMELIKLEKKLKYFEDIVLKKEAHNNKIQGDLYIKKMLKKKDARHTSSGLVFFIKKKGSGKFLHDSDVITVHYKGSLINGNEFDNSYKRGQPLSFSLDSVIPGWIEGLKYIKKGGLIKLVIPPKLAYGETGVPGIPGNSTLIFEIELIDIQSK</sequence>
<name>FKBA_BUCBP</name>
<dbReference type="EC" id="5.2.1.8"/>
<dbReference type="EMBL" id="AE016826">
    <property type="protein sequence ID" value="AAO27182.1"/>
    <property type="molecule type" value="Genomic_DNA"/>
</dbReference>
<dbReference type="RefSeq" id="WP_011091583.1">
    <property type="nucleotide sequence ID" value="NC_004545.1"/>
</dbReference>
<dbReference type="SMR" id="Q89A61"/>
<dbReference type="STRING" id="224915.bbp_476"/>
<dbReference type="KEGG" id="bab:bbp_476"/>
<dbReference type="eggNOG" id="COG0545">
    <property type="taxonomic scope" value="Bacteria"/>
</dbReference>
<dbReference type="HOGENOM" id="CLU_013615_0_2_6"/>
<dbReference type="OrthoDB" id="9814548at2"/>
<dbReference type="Proteomes" id="UP000000601">
    <property type="component" value="Chromosome"/>
</dbReference>
<dbReference type="GO" id="GO:0003755">
    <property type="term" value="F:peptidyl-prolyl cis-trans isomerase activity"/>
    <property type="evidence" value="ECO:0007669"/>
    <property type="project" value="UniProtKB-KW"/>
</dbReference>
<dbReference type="GO" id="GO:0006457">
    <property type="term" value="P:protein folding"/>
    <property type="evidence" value="ECO:0007669"/>
    <property type="project" value="InterPro"/>
</dbReference>
<dbReference type="Gene3D" id="3.10.50.40">
    <property type="match status" value="1"/>
</dbReference>
<dbReference type="Gene3D" id="1.10.287.460">
    <property type="entry name" value="Peptidyl-prolyl cis-trans isomerase, FKBP-type, N-terminal domain"/>
    <property type="match status" value="1"/>
</dbReference>
<dbReference type="InterPro" id="IPR046357">
    <property type="entry name" value="PPIase_dom_sf"/>
</dbReference>
<dbReference type="InterPro" id="IPR001179">
    <property type="entry name" value="PPIase_FKBP_dom"/>
</dbReference>
<dbReference type="InterPro" id="IPR000774">
    <property type="entry name" value="PPIase_FKBP_N"/>
</dbReference>
<dbReference type="InterPro" id="IPR036944">
    <property type="entry name" value="PPIase_FKBP_N_sf"/>
</dbReference>
<dbReference type="NCBIfam" id="NF008150">
    <property type="entry name" value="PRK10902.1"/>
    <property type="match status" value="1"/>
</dbReference>
<dbReference type="PANTHER" id="PTHR43811:SF19">
    <property type="entry name" value="39 KDA FK506-BINDING NUCLEAR PROTEIN"/>
    <property type="match status" value="1"/>
</dbReference>
<dbReference type="PANTHER" id="PTHR43811">
    <property type="entry name" value="FKBP-TYPE PEPTIDYL-PROLYL CIS-TRANS ISOMERASE FKPA"/>
    <property type="match status" value="1"/>
</dbReference>
<dbReference type="Pfam" id="PF00254">
    <property type="entry name" value="FKBP_C"/>
    <property type="match status" value="1"/>
</dbReference>
<dbReference type="Pfam" id="PF01346">
    <property type="entry name" value="FKBP_N"/>
    <property type="match status" value="1"/>
</dbReference>
<dbReference type="SUPFAM" id="SSF54534">
    <property type="entry name" value="FKBP-like"/>
    <property type="match status" value="1"/>
</dbReference>
<dbReference type="PROSITE" id="PS50059">
    <property type="entry name" value="FKBP_PPIASE"/>
    <property type="match status" value="1"/>
</dbReference>
<reference key="1">
    <citation type="journal article" date="2003" name="Proc. Natl. Acad. Sci. U.S.A.">
        <title>Reductive genome evolution in Buchnera aphidicola.</title>
        <authorList>
            <person name="van Ham R.C.H.J."/>
            <person name="Kamerbeek J."/>
            <person name="Palacios C."/>
            <person name="Rausell C."/>
            <person name="Abascal F."/>
            <person name="Bastolla U."/>
            <person name="Fernandez J.M."/>
            <person name="Jimenez L."/>
            <person name="Postigo M."/>
            <person name="Silva F.J."/>
            <person name="Tamames J."/>
            <person name="Viguera E."/>
            <person name="Latorre A."/>
            <person name="Valencia A."/>
            <person name="Moran F."/>
            <person name="Moya A."/>
        </authorList>
    </citation>
    <scope>NUCLEOTIDE SEQUENCE [LARGE SCALE GENOMIC DNA]</scope>
    <source>
        <strain>Bp</strain>
    </source>
</reference>
<evidence type="ECO:0000255" key="1">
    <source>
        <dbReference type="PROSITE-ProRule" id="PRU00277"/>
    </source>
</evidence>
<evidence type="ECO:0000305" key="2"/>
<feature type="chain" id="PRO_0000075366" description="FKBP-type peptidyl-prolyl cis-trans isomerase FkpA">
    <location>
        <begin position="1"/>
        <end position="251"/>
    </location>
</feature>
<feature type="domain" description="PPIase FKBP-type" evidence="1">
    <location>
        <begin position="164"/>
        <end position="251"/>
    </location>
</feature>
<proteinExistence type="inferred from homology"/>
<protein>
    <recommendedName>
        <fullName>FKBP-type peptidyl-prolyl cis-trans isomerase FkpA</fullName>
        <shortName>PPIase</shortName>
        <ecNumber>5.2.1.8</ecNumber>
    </recommendedName>
    <alternativeName>
        <fullName>Rotamase</fullName>
    </alternativeName>
</protein>